<name>FPG_PROM9</name>
<dbReference type="EC" id="3.2.2.23" evidence="2"/>
<dbReference type="EC" id="4.2.99.18" evidence="2"/>
<dbReference type="EMBL" id="CP000111">
    <property type="protein sequence ID" value="ABB49395.1"/>
    <property type="molecule type" value="Genomic_DNA"/>
</dbReference>
<dbReference type="RefSeq" id="WP_011375895.1">
    <property type="nucleotide sequence ID" value="NC_007577.1"/>
</dbReference>
<dbReference type="SMR" id="Q31CK0"/>
<dbReference type="STRING" id="74546.PMT9312_0334"/>
<dbReference type="KEGG" id="pmi:PMT9312_0334"/>
<dbReference type="eggNOG" id="COG0266">
    <property type="taxonomic scope" value="Bacteria"/>
</dbReference>
<dbReference type="HOGENOM" id="CLU_038423_1_2_3"/>
<dbReference type="OrthoDB" id="9800855at2"/>
<dbReference type="Proteomes" id="UP000002715">
    <property type="component" value="Chromosome"/>
</dbReference>
<dbReference type="GO" id="GO:0034039">
    <property type="term" value="F:8-oxo-7,8-dihydroguanine DNA N-glycosylase activity"/>
    <property type="evidence" value="ECO:0007669"/>
    <property type="project" value="TreeGrafter"/>
</dbReference>
<dbReference type="GO" id="GO:0140078">
    <property type="term" value="F:class I DNA-(apurinic or apyrimidinic site) endonuclease activity"/>
    <property type="evidence" value="ECO:0007669"/>
    <property type="project" value="UniProtKB-EC"/>
</dbReference>
<dbReference type="GO" id="GO:0003684">
    <property type="term" value="F:damaged DNA binding"/>
    <property type="evidence" value="ECO:0007669"/>
    <property type="project" value="InterPro"/>
</dbReference>
<dbReference type="GO" id="GO:0008270">
    <property type="term" value="F:zinc ion binding"/>
    <property type="evidence" value="ECO:0007669"/>
    <property type="project" value="UniProtKB-UniRule"/>
</dbReference>
<dbReference type="GO" id="GO:0006284">
    <property type="term" value="P:base-excision repair"/>
    <property type="evidence" value="ECO:0007669"/>
    <property type="project" value="InterPro"/>
</dbReference>
<dbReference type="CDD" id="cd08966">
    <property type="entry name" value="EcFpg-like_N"/>
    <property type="match status" value="1"/>
</dbReference>
<dbReference type="FunFam" id="1.10.8.50:FF:000003">
    <property type="entry name" value="Formamidopyrimidine-DNA glycosylase"/>
    <property type="match status" value="1"/>
</dbReference>
<dbReference type="Gene3D" id="1.10.8.50">
    <property type="match status" value="1"/>
</dbReference>
<dbReference type="Gene3D" id="3.20.190.10">
    <property type="entry name" value="MutM-like, N-terminal"/>
    <property type="match status" value="1"/>
</dbReference>
<dbReference type="HAMAP" id="MF_00103">
    <property type="entry name" value="Fapy_DNA_glycosyl"/>
    <property type="match status" value="1"/>
</dbReference>
<dbReference type="InterPro" id="IPR015886">
    <property type="entry name" value="DNA_glyclase/AP_lyase_DNA-bd"/>
</dbReference>
<dbReference type="InterPro" id="IPR015887">
    <property type="entry name" value="DNA_glyclase_Znf_dom_DNA_BS"/>
</dbReference>
<dbReference type="InterPro" id="IPR020629">
    <property type="entry name" value="Formamido-pyr_DNA_Glyclase"/>
</dbReference>
<dbReference type="InterPro" id="IPR012319">
    <property type="entry name" value="FPG_cat"/>
</dbReference>
<dbReference type="InterPro" id="IPR035937">
    <property type="entry name" value="MutM-like_N-ter"/>
</dbReference>
<dbReference type="InterPro" id="IPR010979">
    <property type="entry name" value="Ribosomal_uS13-like_H2TH"/>
</dbReference>
<dbReference type="InterPro" id="IPR000214">
    <property type="entry name" value="Znf_DNA_glyclase/AP_lyase"/>
</dbReference>
<dbReference type="InterPro" id="IPR010663">
    <property type="entry name" value="Znf_FPG/IleRS"/>
</dbReference>
<dbReference type="NCBIfam" id="TIGR00577">
    <property type="entry name" value="fpg"/>
    <property type="match status" value="1"/>
</dbReference>
<dbReference type="NCBIfam" id="NF002211">
    <property type="entry name" value="PRK01103.1"/>
    <property type="match status" value="1"/>
</dbReference>
<dbReference type="NCBIfam" id="NF010551">
    <property type="entry name" value="PRK13945.1"/>
    <property type="match status" value="1"/>
</dbReference>
<dbReference type="PANTHER" id="PTHR22993">
    <property type="entry name" value="FORMAMIDOPYRIMIDINE-DNA GLYCOSYLASE"/>
    <property type="match status" value="1"/>
</dbReference>
<dbReference type="PANTHER" id="PTHR22993:SF9">
    <property type="entry name" value="FORMAMIDOPYRIMIDINE-DNA GLYCOSYLASE"/>
    <property type="match status" value="1"/>
</dbReference>
<dbReference type="Pfam" id="PF01149">
    <property type="entry name" value="Fapy_DNA_glyco"/>
    <property type="match status" value="1"/>
</dbReference>
<dbReference type="Pfam" id="PF06831">
    <property type="entry name" value="H2TH"/>
    <property type="match status" value="1"/>
</dbReference>
<dbReference type="Pfam" id="PF06827">
    <property type="entry name" value="zf-FPG_IleRS"/>
    <property type="match status" value="1"/>
</dbReference>
<dbReference type="SMART" id="SM00898">
    <property type="entry name" value="Fapy_DNA_glyco"/>
    <property type="match status" value="1"/>
</dbReference>
<dbReference type="SMART" id="SM01232">
    <property type="entry name" value="H2TH"/>
    <property type="match status" value="1"/>
</dbReference>
<dbReference type="SUPFAM" id="SSF57716">
    <property type="entry name" value="Glucocorticoid receptor-like (DNA-binding domain)"/>
    <property type="match status" value="1"/>
</dbReference>
<dbReference type="SUPFAM" id="SSF81624">
    <property type="entry name" value="N-terminal domain of MutM-like DNA repair proteins"/>
    <property type="match status" value="1"/>
</dbReference>
<dbReference type="SUPFAM" id="SSF46946">
    <property type="entry name" value="S13-like H2TH domain"/>
    <property type="match status" value="1"/>
</dbReference>
<dbReference type="PROSITE" id="PS51068">
    <property type="entry name" value="FPG_CAT"/>
    <property type="match status" value="1"/>
</dbReference>
<dbReference type="PROSITE" id="PS01242">
    <property type="entry name" value="ZF_FPG_1"/>
    <property type="match status" value="1"/>
</dbReference>
<dbReference type="PROSITE" id="PS51066">
    <property type="entry name" value="ZF_FPG_2"/>
    <property type="match status" value="1"/>
</dbReference>
<feature type="initiator methionine" description="Removed" evidence="1">
    <location>
        <position position="1"/>
    </location>
</feature>
<feature type="chain" id="PRO_1000008738" description="Formamidopyrimidine-DNA glycosylase">
    <location>
        <begin position="2"/>
        <end position="293"/>
    </location>
</feature>
<feature type="zinc finger region" description="FPG-type" evidence="2">
    <location>
        <begin position="259"/>
        <end position="293"/>
    </location>
</feature>
<feature type="active site" description="Schiff-base intermediate with DNA" evidence="2">
    <location>
        <position position="2"/>
    </location>
</feature>
<feature type="active site" description="Proton donor" evidence="2">
    <location>
        <position position="3"/>
    </location>
</feature>
<feature type="active site" description="Proton donor; for beta-elimination activity" evidence="2">
    <location>
        <position position="60"/>
    </location>
</feature>
<feature type="active site" description="Proton donor; for delta-elimination activity" evidence="2">
    <location>
        <position position="283"/>
    </location>
</feature>
<feature type="binding site" evidence="2">
    <location>
        <position position="110"/>
    </location>
    <ligand>
        <name>DNA</name>
        <dbReference type="ChEBI" id="CHEBI:16991"/>
    </ligand>
</feature>
<feature type="binding site" evidence="2">
    <location>
        <position position="129"/>
    </location>
    <ligand>
        <name>DNA</name>
        <dbReference type="ChEBI" id="CHEBI:16991"/>
    </ligand>
</feature>
<feature type="binding site" evidence="2">
    <location>
        <position position="174"/>
    </location>
    <ligand>
        <name>DNA</name>
        <dbReference type="ChEBI" id="CHEBI:16991"/>
    </ligand>
</feature>
<reference key="1">
    <citation type="journal article" date="2006" name="Science">
        <title>Genomic islands and the ecology and evolution of Prochlorococcus.</title>
        <authorList>
            <person name="Coleman M.L."/>
            <person name="Sullivan M.B."/>
            <person name="Martiny A.C."/>
            <person name="Steglich C."/>
            <person name="Barry K."/>
            <person name="Delong E.F."/>
            <person name="Chisholm S.W."/>
        </authorList>
    </citation>
    <scope>NUCLEOTIDE SEQUENCE [LARGE SCALE GENOMIC DNA]</scope>
    <source>
        <strain>MIT 9312</strain>
    </source>
</reference>
<organism>
    <name type="scientific">Prochlorococcus marinus (strain MIT 9312)</name>
    <dbReference type="NCBI Taxonomy" id="74546"/>
    <lineage>
        <taxon>Bacteria</taxon>
        <taxon>Bacillati</taxon>
        <taxon>Cyanobacteriota</taxon>
        <taxon>Cyanophyceae</taxon>
        <taxon>Synechococcales</taxon>
        <taxon>Prochlorococcaceae</taxon>
        <taxon>Prochlorococcus</taxon>
    </lineage>
</organism>
<keyword id="KW-0227">DNA damage</keyword>
<keyword id="KW-0234">DNA repair</keyword>
<keyword id="KW-0238">DNA-binding</keyword>
<keyword id="KW-0326">Glycosidase</keyword>
<keyword id="KW-0378">Hydrolase</keyword>
<keyword id="KW-0456">Lyase</keyword>
<keyword id="KW-0479">Metal-binding</keyword>
<keyword id="KW-0511">Multifunctional enzyme</keyword>
<keyword id="KW-0862">Zinc</keyword>
<keyword id="KW-0863">Zinc-finger</keyword>
<protein>
    <recommendedName>
        <fullName evidence="2">Formamidopyrimidine-DNA glycosylase</fullName>
        <shortName evidence="2">Fapy-DNA glycosylase</shortName>
        <ecNumber evidence="2">3.2.2.23</ecNumber>
    </recommendedName>
    <alternativeName>
        <fullName evidence="2">DNA-(apurinic or apyrimidinic site) lyase MutM</fullName>
        <shortName evidence="2">AP lyase MutM</shortName>
        <ecNumber evidence="2">4.2.99.18</ecNumber>
    </alternativeName>
</protein>
<proteinExistence type="inferred from homology"/>
<gene>
    <name evidence="2" type="primary">mutM</name>
    <name evidence="2" type="synonym">fpg</name>
    <name type="ordered locus">PMT9312_0334</name>
</gene>
<sequence>MPELPEVETVRRGLEQKLNNFIIKKVEVCRNSTVAFPTEKEEFIKGLQNSLLYKWDRRGKYLIAELKKIENENIKFPLKKLRQNNGFLVVHLRMTGYFKFIDNSTQPCKHTRIRVFDKKNNELRYIDVRSFGQMWWIKEGLSPNKIIKGLGSLGPEPFSKNFDEKYLKKVISKRKKSIKAILLDQTIVAGIGNIYADESLYSAGISPFRAAKTIKKNELINLKESIVNVLKKSIGSGGTTFSDFRDLEGENGNFGLQTNVYRRTGKECRKCGNLIEKQKIAGRSTHWCPNCQK</sequence>
<evidence type="ECO:0000250" key="1"/>
<evidence type="ECO:0000255" key="2">
    <source>
        <dbReference type="HAMAP-Rule" id="MF_00103"/>
    </source>
</evidence>
<comment type="function">
    <text evidence="2">Involved in base excision repair of DNA damaged by oxidation or by mutagenic agents. Acts as a DNA glycosylase that recognizes and removes damaged bases. Has a preference for oxidized purines, such as 7,8-dihydro-8-oxoguanine (8-oxoG). Has AP (apurinic/apyrimidinic) lyase activity and introduces nicks in the DNA strand. Cleaves the DNA backbone by beta-delta elimination to generate a single-strand break at the site of the removed base with both 3'- and 5'-phosphates.</text>
</comment>
<comment type="catalytic activity">
    <reaction evidence="2">
        <text>Hydrolysis of DNA containing ring-opened 7-methylguanine residues, releasing 2,6-diamino-4-hydroxy-5-(N-methyl)formamidopyrimidine.</text>
        <dbReference type="EC" id="3.2.2.23"/>
    </reaction>
</comment>
<comment type="catalytic activity">
    <reaction evidence="2">
        <text>2'-deoxyribonucleotide-(2'-deoxyribose 5'-phosphate)-2'-deoxyribonucleotide-DNA = a 3'-end 2'-deoxyribonucleotide-(2,3-dehydro-2,3-deoxyribose 5'-phosphate)-DNA + a 5'-end 5'-phospho-2'-deoxyribonucleoside-DNA + H(+)</text>
        <dbReference type="Rhea" id="RHEA:66592"/>
        <dbReference type="Rhea" id="RHEA-COMP:13180"/>
        <dbReference type="Rhea" id="RHEA-COMP:16897"/>
        <dbReference type="Rhea" id="RHEA-COMP:17067"/>
        <dbReference type="ChEBI" id="CHEBI:15378"/>
        <dbReference type="ChEBI" id="CHEBI:136412"/>
        <dbReference type="ChEBI" id="CHEBI:157695"/>
        <dbReference type="ChEBI" id="CHEBI:167181"/>
        <dbReference type="EC" id="4.2.99.18"/>
    </reaction>
</comment>
<comment type="cofactor">
    <cofactor evidence="2">
        <name>Zn(2+)</name>
        <dbReference type="ChEBI" id="CHEBI:29105"/>
    </cofactor>
    <text evidence="2">Binds 1 zinc ion per subunit.</text>
</comment>
<comment type="subunit">
    <text evidence="2">Monomer.</text>
</comment>
<comment type="similarity">
    <text evidence="2">Belongs to the FPG family.</text>
</comment>
<accession>Q31CK0</accession>